<gene>
    <name evidence="1" type="primary">mraY</name>
    <name type="ordered locus">BRADO5662</name>
</gene>
<accession>A4YZK6</accession>
<organism>
    <name type="scientific">Bradyrhizobium sp. (strain ORS 278)</name>
    <dbReference type="NCBI Taxonomy" id="114615"/>
    <lineage>
        <taxon>Bacteria</taxon>
        <taxon>Pseudomonadati</taxon>
        <taxon>Pseudomonadota</taxon>
        <taxon>Alphaproteobacteria</taxon>
        <taxon>Hyphomicrobiales</taxon>
        <taxon>Nitrobacteraceae</taxon>
        <taxon>Bradyrhizobium</taxon>
    </lineage>
</organism>
<comment type="function">
    <text evidence="1">Catalyzes the initial step of the lipid cycle reactions in the biosynthesis of the cell wall peptidoglycan: transfers peptidoglycan precursor phospho-MurNAc-pentapeptide from UDP-MurNAc-pentapeptide onto the lipid carrier undecaprenyl phosphate, yielding undecaprenyl-pyrophosphoryl-MurNAc-pentapeptide, known as lipid I.</text>
</comment>
<comment type="catalytic activity">
    <reaction evidence="1">
        <text>UDP-N-acetyl-alpha-D-muramoyl-L-alanyl-gamma-D-glutamyl-meso-2,6-diaminopimeloyl-D-alanyl-D-alanine + di-trans,octa-cis-undecaprenyl phosphate = di-trans,octa-cis-undecaprenyl diphospho-N-acetyl-alpha-D-muramoyl-L-alanyl-D-glutamyl-meso-2,6-diaminopimeloyl-D-alanyl-D-alanine + UMP</text>
        <dbReference type="Rhea" id="RHEA:28386"/>
        <dbReference type="ChEBI" id="CHEBI:57865"/>
        <dbReference type="ChEBI" id="CHEBI:60392"/>
        <dbReference type="ChEBI" id="CHEBI:61386"/>
        <dbReference type="ChEBI" id="CHEBI:61387"/>
        <dbReference type="EC" id="2.7.8.13"/>
    </reaction>
</comment>
<comment type="cofactor">
    <cofactor evidence="1">
        <name>Mg(2+)</name>
        <dbReference type="ChEBI" id="CHEBI:18420"/>
    </cofactor>
</comment>
<comment type="pathway">
    <text evidence="1">Cell wall biogenesis; peptidoglycan biosynthesis.</text>
</comment>
<comment type="subcellular location">
    <subcellularLocation>
        <location evidence="1">Cell inner membrane</location>
        <topology evidence="1">Multi-pass membrane protein</topology>
    </subcellularLocation>
</comment>
<comment type="similarity">
    <text evidence="1">Belongs to the glycosyltransferase 4 family. MraY subfamily.</text>
</comment>
<name>MRAY_BRASO</name>
<sequence length="368" mass="39628">MFYWLIELTNTFPSLSVFRGVLNVFRYITFRTGGAVVTGALFVFLFGPWIIDHLRLRQGKGQPIRTDGPQSHIISKKGTPTMGGLMILSGLVVSTVLWANPLNPYVWIVLAVTLGFGFVGFYDDYLKVTKQSHSGFAGRARLLIEAAIALVACYALVRLGRDPSSTGLAIPFFKDLVIKFGWMYVIFGAFVIVGAGNAVNLTDGLDGLAIVPVMIASASFGLIAYLAGNAVFSDYLQIHYVAGTGELAVLCGAVLGAGLGFLWFNAPPASIFMGDTGSLALGGMLGSIAVAVKHEIVLAVIGGLFVLEAVSVIVQVASFKLTGKRIFRMAPIHHHFEQLGWTEPQIVIRFWIISVMLALVGLSTLKLR</sequence>
<protein>
    <recommendedName>
        <fullName evidence="1">Phospho-N-acetylmuramoyl-pentapeptide-transferase</fullName>
        <ecNumber evidence="1">2.7.8.13</ecNumber>
    </recommendedName>
    <alternativeName>
        <fullName evidence="1">UDP-MurNAc-pentapeptide phosphotransferase</fullName>
    </alternativeName>
</protein>
<reference key="1">
    <citation type="journal article" date="2007" name="Science">
        <title>Legumes symbioses: absence of nod genes in photosynthetic bradyrhizobia.</title>
        <authorList>
            <person name="Giraud E."/>
            <person name="Moulin L."/>
            <person name="Vallenet D."/>
            <person name="Barbe V."/>
            <person name="Cytryn E."/>
            <person name="Avarre J.-C."/>
            <person name="Jaubert M."/>
            <person name="Simon D."/>
            <person name="Cartieaux F."/>
            <person name="Prin Y."/>
            <person name="Bena G."/>
            <person name="Hannibal L."/>
            <person name="Fardoux J."/>
            <person name="Kojadinovic M."/>
            <person name="Vuillet L."/>
            <person name="Lajus A."/>
            <person name="Cruveiller S."/>
            <person name="Rouy Z."/>
            <person name="Mangenot S."/>
            <person name="Segurens B."/>
            <person name="Dossat C."/>
            <person name="Franck W.L."/>
            <person name="Chang W.-S."/>
            <person name="Saunders E."/>
            <person name="Bruce D."/>
            <person name="Richardson P."/>
            <person name="Normand P."/>
            <person name="Dreyfus B."/>
            <person name="Pignol D."/>
            <person name="Stacey G."/>
            <person name="Emerich D."/>
            <person name="Vermeglio A."/>
            <person name="Medigue C."/>
            <person name="Sadowsky M."/>
        </authorList>
    </citation>
    <scope>NUCLEOTIDE SEQUENCE [LARGE SCALE GENOMIC DNA]</scope>
    <source>
        <strain>ORS 278</strain>
    </source>
</reference>
<proteinExistence type="inferred from homology"/>
<dbReference type="EC" id="2.7.8.13" evidence="1"/>
<dbReference type="EMBL" id="CU234118">
    <property type="protein sequence ID" value="CAL79332.1"/>
    <property type="molecule type" value="Genomic_DNA"/>
</dbReference>
<dbReference type="RefSeq" id="WP_012029239.1">
    <property type="nucleotide sequence ID" value="NC_009445.1"/>
</dbReference>
<dbReference type="SMR" id="A4YZK6"/>
<dbReference type="STRING" id="114615.BRADO5662"/>
<dbReference type="KEGG" id="bra:BRADO5662"/>
<dbReference type="eggNOG" id="COG0472">
    <property type="taxonomic scope" value="Bacteria"/>
</dbReference>
<dbReference type="HOGENOM" id="CLU_023982_0_0_5"/>
<dbReference type="OrthoDB" id="9805475at2"/>
<dbReference type="UniPathway" id="UPA00219"/>
<dbReference type="Proteomes" id="UP000001994">
    <property type="component" value="Chromosome"/>
</dbReference>
<dbReference type="GO" id="GO:0005886">
    <property type="term" value="C:plasma membrane"/>
    <property type="evidence" value="ECO:0007669"/>
    <property type="project" value="UniProtKB-SubCell"/>
</dbReference>
<dbReference type="GO" id="GO:0046872">
    <property type="term" value="F:metal ion binding"/>
    <property type="evidence" value="ECO:0007669"/>
    <property type="project" value="UniProtKB-KW"/>
</dbReference>
<dbReference type="GO" id="GO:0008963">
    <property type="term" value="F:phospho-N-acetylmuramoyl-pentapeptide-transferase activity"/>
    <property type="evidence" value="ECO:0007669"/>
    <property type="project" value="UniProtKB-UniRule"/>
</dbReference>
<dbReference type="GO" id="GO:0051992">
    <property type="term" value="F:UDP-N-acetylmuramoyl-L-alanyl-D-glutamyl-meso-2,6-diaminopimelyl-D-alanyl-D-alanine:undecaprenyl-phosphate transferase activity"/>
    <property type="evidence" value="ECO:0007669"/>
    <property type="project" value="RHEA"/>
</dbReference>
<dbReference type="GO" id="GO:0051301">
    <property type="term" value="P:cell division"/>
    <property type="evidence" value="ECO:0007669"/>
    <property type="project" value="UniProtKB-KW"/>
</dbReference>
<dbReference type="GO" id="GO:0071555">
    <property type="term" value="P:cell wall organization"/>
    <property type="evidence" value="ECO:0007669"/>
    <property type="project" value="UniProtKB-KW"/>
</dbReference>
<dbReference type="GO" id="GO:0009252">
    <property type="term" value="P:peptidoglycan biosynthetic process"/>
    <property type="evidence" value="ECO:0007669"/>
    <property type="project" value="UniProtKB-UniRule"/>
</dbReference>
<dbReference type="GO" id="GO:0008360">
    <property type="term" value="P:regulation of cell shape"/>
    <property type="evidence" value="ECO:0007669"/>
    <property type="project" value="UniProtKB-KW"/>
</dbReference>
<dbReference type="CDD" id="cd06852">
    <property type="entry name" value="GT_MraY"/>
    <property type="match status" value="1"/>
</dbReference>
<dbReference type="HAMAP" id="MF_00038">
    <property type="entry name" value="MraY"/>
    <property type="match status" value="1"/>
</dbReference>
<dbReference type="InterPro" id="IPR000715">
    <property type="entry name" value="Glycosyl_transferase_4"/>
</dbReference>
<dbReference type="InterPro" id="IPR003524">
    <property type="entry name" value="PNAcMuramoyl-5peptid_Trfase"/>
</dbReference>
<dbReference type="InterPro" id="IPR018480">
    <property type="entry name" value="PNAcMuramoyl-5peptid_Trfase_CS"/>
</dbReference>
<dbReference type="NCBIfam" id="TIGR00445">
    <property type="entry name" value="mraY"/>
    <property type="match status" value="1"/>
</dbReference>
<dbReference type="PANTHER" id="PTHR22926">
    <property type="entry name" value="PHOSPHO-N-ACETYLMURAMOYL-PENTAPEPTIDE-TRANSFERASE"/>
    <property type="match status" value="1"/>
</dbReference>
<dbReference type="PANTHER" id="PTHR22926:SF5">
    <property type="entry name" value="PHOSPHO-N-ACETYLMURAMOYL-PENTAPEPTIDE-TRANSFERASE HOMOLOG"/>
    <property type="match status" value="1"/>
</dbReference>
<dbReference type="Pfam" id="PF00953">
    <property type="entry name" value="Glycos_transf_4"/>
    <property type="match status" value="1"/>
</dbReference>
<dbReference type="Pfam" id="PF10555">
    <property type="entry name" value="MraY_sig1"/>
    <property type="match status" value="1"/>
</dbReference>
<dbReference type="PROSITE" id="PS01347">
    <property type="entry name" value="MRAY_1"/>
    <property type="match status" value="1"/>
</dbReference>
<dbReference type="PROSITE" id="PS01348">
    <property type="entry name" value="MRAY_2"/>
    <property type="match status" value="1"/>
</dbReference>
<keyword id="KW-0131">Cell cycle</keyword>
<keyword id="KW-0132">Cell division</keyword>
<keyword id="KW-0997">Cell inner membrane</keyword>
<keyword id="KW-1003">Cell membrane</keyword>
<keyword id="KW-0133">Cell shape</keyword>
<keyword id="KW-0961">Cell wall biogenesis/degradation</keyword>
<keyword id="KW-0460">Magnesium</keyword>
<keyword id="KW-0472">Membrane</keyword>
<keyword id="KW-0479">Metal-binding</keyword>
<keyword id="KW-0573">Peptidoglycan synthesis</keyword>
<keyword id="KW-1185">Reference proteome</keyword>
<keyword id="KW-0808">Transferase</keyword>
<keyword id="KW-0812">Transmembrane</keyword>
<keyword id="KW-1133">Transmembrane helix</keyword>
<evidence type="ECO:0000255" key="1">
    <source>
        <dbReference type="HAMAP-Rule" id="MF_00038"/>
    </source>
</evidence>
<feature type="chain" id="PRO_1000002942" description="Phospho-N-acetylmuramoyl-pentapeptide-transferase">
    <location>
        <begin position="1"/>
        <end position="368"/>
    </location>
</feature>
<feature type="transmembrane region" description="Helical" evidence="1">
    <location>
        <begin position="34"/>
        <end position="54"/>
    </location>
</feature>
<feature type="transmembrane region" description="Helical" evidence="1">
    <location>
        <begin position="79"/>
        <end position="99"/>
    </location>
</feature>
<feature type="transmembrane region" description="Helical" evidence="1">
    <location>
        <begin position="102"/>
        <end position="122"/>
    </location>
</feature>
<feature type="transmembrane region" description="Helical" evidence="1">
    <location>
        <begin position="140"/>
        <end position="160"/>
    </location>
</feature>
<feature type="transmembrane region" description="Helical" evidence="1">
    <location>
        <begin position="176"/>
        <end position="196"/>
    </location>
</feature>
<feature type="transmembrane region" description="Helical" evidence="1">
    <location>
        <begin position="207"/>
        <end position="227"/>
    </location>
</feature>
<feature type="transmembrane region" description="Helical" evidence="1">
    <location>
        <begin position="247"/>
        <end position="267"/>
    </location>
</feature>
<feature type="transmembrane region" description="Helical" evidence="1">
    <location>
        <begin position="271"/>
        <end position="291"/>
    </location>
</feature>
<feature type="transmembrane region" description="Helical" evidence="1">
    <location>
        <begin position="296"/>
        <end position="316"/>
    </location>
</feature>
<feature type="transmembrane region" description="Helical" evidence="1">
    <location>
        <begin position="345"/>
        <end position="365"/>
    </location>
</feature>